<gene>
    <name evidence="1" type="primary">atpB</name>
    <name type="ordered locus">YPO4127</name>
    <name type="ordered locus">y4141</name>
    <name type="ordered locus">YP_4034</name>
</gene>
<name>ATP6_YERPE</name>
<reference key="1">
    <citation type="journal article" date="2002" name="J. Bacteriol.">
        <title>Genome sequence of Yersinia pestis KIM.</title>
        <authorList>
            <person name="Deng W."/>
            <person name="Burland V."/>
            <person name="Plunkett G. III"/>
            <person name="Boutin A."/>
            <person name="Mayhew G.F."/>
            <person name="Liss P."/>
            <person name="Perna N.T."/>
            <person name="Rose D.J."/>
            <person name="Mau B."/>
            <person name="Zhou S."/>
            <person name="Schwartz D.C."/>
            <person name="Fetherston J.D."/>
            <person name="Lindler L.E."/>
            <person name="Brubaker R.R."/>
            <person name="Plano G.V."/>
            <person name="Straley S.C."/>
            <person name="McDonough K.A."/>
            <person name="Nilles M.L."/>
            <person name="Matson J.S."/>
            <person name="Blattner F.R."/>
            <person name="Perry R.D."/>
        </authorList>
    </citation>
    <scope>NUCLEOTIDE SEQUENCE [LARGE SCALE GENOMIC DNA]</scope>
    <source>
        <strain>KIM10+ / Biovar Mediaevalis</strain>
    </source>
</reference>
<reference key="2">
    <citation type="journal article" date="2001" name="Nature">
        <title>Genome sequence of Yersinia pestis, the causative agent of plague.</title>
        <authorList>
            <person name="Parkhill J."/>
            <person name="Wren B.W."/>
            <person name="Thomson N.R."/>
            <person name="Titball R.W."/>
            <person name="Holden M.T.G."/>
            <person name="Prentice M.B."/>
            <person name="Sebaihia M."/>
            <person name="James K.D."/>
            <person name="Churcher C.M."/>
            <person name="Mungall K.L."/>
            <person name="Baker S."/>
            <person name="Basham D."/>
            <person name="Bentley S.D."/>
            <person name="Brooks K."/>
            <person name="Cerdeno-Tarraga A.-M."/>
            <person name="Chillingworth T."/>
            <person name="Cronin A."/>
            <person name="Davies R.M."/>
            <person name="Davis P."/>
            <person name="Dougan G."/>
            <person name="Feltwell T."/>
            <person name="Hamlin N."/>
            <person name="Holroyd S."/>
            <person name="Jagels K."/>
            <person name="Karlyshev A.V."/>
            <person name="Leather S."/>
            <person name="Moule S."/>
            <person name="Oyston P.C.F."/>
            <person name="Quail M.A."/>
            <person name="Rutherford K.M."/>
            <person name="Simmonds M."/>
            <person name="Skelton J."/>
            <person name="Stevens K."/>
            <person name="Whitehead S."/>
            <person name="Barrell B.G."/>
        </authorList>
    </citation>
    <scope>NUCLEOTIDE SEQUENCE [LARGE SCALE GENOMIC DNA]</scope>
    <source>
        <strain>CO-92 / Biovar Orientalis</strain>
    </source>
</reference>
<reference key="3">
    <citation type="journal article" date="2004" name="DNA Res.">
        <title>Complete genome sequence of Yersinia pestis strain 91001, an isolate avirulent to humans.</title>
        <authorList>
            <person name="Song Y."/>
            <person name="Tong Z."/>
            <person name="Wang J."/>
            <person name="Wang L."/>
            <person name="Guo Z."/>
            <person name="Han Y."/>
            <person name="Zhang J."/>
            <person name="Pei D."/>
            <person name="Zhou D."/>
            <person name="Qin H."/>
            <person name="Pang X."/>
            <person name="Han Y."/>
            <person name="Zhai J."/>
            <person name="Li M."/>
            <person name="Cui B."/>
            <person name="Qi Z."/>
            <person name="Jin L."/>
            <person name="Dai R."/>
            <person name="Chen F."/>
            <person name="Li S."/>
            <person name="Ye C."/>
            <person name="Du Z."/>
            <person name="Lin W."/>
            <person name="Wang J."/>
            <person name="Yu J."/>
            <person name="Yang H."/>
            <person name="Wang J."/>
            <person name="Huang P."/>
            <person name="Yang R."/>
        </authorList>
    </citation>
    <scope>NUCLEOTIDE SEQUENCE [LARGE SCALE GENOMIC DNA]</scope>
    <source>
        <strain>91001 / Biovar Mediaevalis</strain>
    </source>
</reference>
<dbReference type="EMBL" id="AE009952">
    <property type="protein sequence ID" value="AAM87683.1"/>
    <property type="molecule type" value="Genomic_DNA"/>
</dbReference>
<dbReference type="EMBL" id="AE017042">
    <property type="protein sequence ID" value="AAS64173.1"/>
    <property type="molecule type" value="Genomic_DNA"/>
</dbReference>
<dbReference type="EMBL" id="AL590842">
    <property type="protein sequence ID" value="CAL22695.1"/>
    <property type="molecule type" value="Genomic_DNA"/>
</dbReference>
<dbReference type="PIR" id="AC0501">
    <property type="entry name" value="AC0501"/>
</dbReference>
<dbReference type="RefSeq" id="WP_002228150.1">
    <property type="nucleotide sequence ID" value="NZ_WUCM01000028.1"/>
</dbReference>
<dbReference type="RefSeq" id="YP_002348978.1">
    <property type="nucleotide sequence ID" value="NC_003143.1"/>
</dbReference>
<dbReference type="SMR" id="Q7CFM3"/>
<dbReference type="STRING" id="214092.YPO4127"/>
<dbReference type="PaxDb" id="214092-YPO4127"/>
<dbReference type="DNASU" id="1149088"/>
<dbReference type="EnsemblBacteria" id="AAS64173">
    <property type="protein sequence ID" value="AAS64173"/>
    <property type="gene ID" value="YP_4034"/>
</dbReference>
<dbReference type="GeneID" id="96663465"/>
<dbReference type="KEGG" id="ype:YPO4127"/>
<dbReference type="KEGG" id="ypk:y4141"/>
<dbReference type="KEGG" id="ypm:YP_4034"/>
<dbReference type="PATRIC" id="fig|214092.21.peg.4671"/>
<dbReference type="eggNOG" id="COG0356">
    <property type="taxonomic scope" value="Bacteria"/>
</dbReference>
<dbReference type="HOGENOM" id="CLU_041018_1_0_6"/>
<dbReference type="OMA" id="GFFWAAF"/>
<dbReference type="OrthoDB" id="9789241at2"/>
<dbReference type="Proteomes" id="UP000000815">
    <property type="component" value="Chromosome"/>
</dbReference>
<dbReference type="Proteomes" id="UP000001019">
    <property type="component" value="Chromosome"/>
</dbReference>
<dbReference type="Proteomes" id="UP000002490">
    <property type="component" value="Chromosome"/>
</dbReference>
<dbReference type="GO" id="GO:0005886">
    <property type="term" value="C:plasma membrane"/>
    <property type="evidence" value="ECO:0000318"/>
    <property type="project" value="GO_Central"/>
</dbReference>
<dbReference type="GO" id="GO:0045259">
    <property type="term" value="C:proton-transporting ATP synthase complex"/>
    <property type="evidence" value="ECO:0007669"/>
    <property type="project" value="UniProtKB-KW"/>
</dbReference>
<dbReference type="GO" id="GO:0046933">
    <property type="term" value="F:proton-transporting ATP synthase activity, rotational mechanism"/>
    <property type="evidence" value="ECO:0000318"/>
    <property type="project" value="GO_Central"/>
</dbReference>
<dbReference type="GO" id="GO:0042777">
    <property type="term" value="P:proton motive force-driven plasma membrane ATP synthesis"/>
    <property type="evidence" value="ECO:0000318"/>
    <property type="project" value="GO_Central"/>
</dbReference>
<dbReference type="CDD" id="cd00310">
    <property type="entry name" value="ATP-synt_Fo_a_6"/>
    <property type="match status" value="1"/>
</dbReference>
<dbReference type="FunFam" id="1.20.120.220:FF:000002">
    <property type="entry name" value="ATP synthase subunit a"/>
    <property type="match status" value="1"/>
</dbReference>
<dbReference type="Gene3D" id="1.20.120.220">
    <property type="entry name" value="ATP synthase, F0 complex, subunit A"/>
    <property type="match status" value="1"/>
</dbReference>
<dbReference type="HAMAP" id="MF_01393">
    <property type="entry name" value="ATP_synth_a_bact"/>
    <property type="match status" value="1"/>
</dbReference>
<dbReference type="InterPro" id="IPR045082">
    <property type="entry name" value="ATP_syn_F0_a_bact/chloroplast"/>
</dbReference>
<dbReference type="InterPro" id="IPR000568">
    <property type="entry name" value="ATP_synth_F0_asu"/>
</dbReference>
<dbReference type="InterPro" id="IPR023011">
    <property type="entry name" value="ATP_synth_F0_asu_AS"/>
</dbReference>
<dbReference type="InterPro" id="IPR035908">
    <property type="entry name" value="F0_ATP_A_sf"/>
</dbReference>
<dbReference type="NCBIfam" id="TIGR01131">
    <property type="entry name" value="ATP_synt_6_or_A"/>
    <property type="match status" value="1"/>
</dbReference>
<dbReference type="NCBIfam" id="NF004477">
    <property type="entry name" value="PRK05815.1-1"/>
    <property type="match status" value="1"/>
</dbReference>
<dbReference type="PANTHER" id="PTHR42823">
    <property type="entry name" value="ATP SYNTHASE SUBUNIT A, CHLOROPLASTIC"/>
    <property type="match status" value="1"/>
</dbReference>
<dbReference type="PANTHER" id="PTHR42823:SF3">
    <property type="entry name" value="ATP SYNTHASE SUBUNIT A, CHLOROPLASTIC"/>
    <property type="match status" value="1"/>
</dbReference>
<dbReference type="Pfam" id="PF00119">
    <property type="entry name" value="ATP-synt_A"/>
    <property type="match status" value="1"/>
</dbReference>
<dbReference type="PRINTS" id="PR00123">
    <property type="entry name" value="ATPASEA"/>
</dbReference>
<dbReference type="SUPFAM" id="SSF81336">
    <property type="entry name" value="F1F0 ATP synthase subunit A"/>
    <property type="match status" value="1"/>
</dbReference>
<dbReference type="PROSITE" id="PS00449">
    <property type="entry name" value="ATPASE_A"/>
    <property type="match status" value="1"/>
</dbReference>
<comment type="function">
    <text evidence="1">Key component of the proton channel; it plays a direct role in the translocation of protons across the membrane.</text>
</comment>
<comment type="subunit">
    <text evidence="1">F-type ATPases have 2 components, CF(1) - the catalytic core - and CF(0) - the membrane proton channel. CF(1) has five subunits: alpha(3), beta(3), gamma(1), delta(1), epsilon(1). CF(0) has three main subunits: a(1), b(2) and c(9-12). The alpha and beta chains form an alternating ring which encloses part of the gamma chain. CF(1) is attached to CF(0) by a central stalk formed by the gamma and epsilon chains, while a peripheral stalk is formed by the delta and b chains.</text>
</comment>
<comment type="subcellular location">
    <subcellularLocation>
        <location evidence="1">Cell inner membrane</location>
        <topology evidence="1">Multi-pass membrane protein</topology>
    </subcellularLocation>
</comment>
<comment type="similarity">
    <text evidence="1">Belongs to the ATPase A chain family.</text>
</comment>
<organism>
    <name type="scientific">Yersinia pestis</name>
    <dbReference type="NCBI Taxonomy" id="632"/>
    <lineage>
        <taxon>Bacteria</taxon>
        <taxon>Pseudomonadati</taxon>
        <taxon>Pseudomonadota</taxon>
        <taxon>Gammaproteobacteria</taxon>
        <taxon>Enterobacterales</taxon>
        <taxon>Yersiniaceae</taxon>
        <taxon>Yersinia</taxon>
    </lineage>
</organism>
<protein>
    <recommendedName>
        <fullName evidence="1">ATP synthase subunit a</fullName>
    </recommendedName>
    <alternativeName>
        <fullName evidence="1">ATP synthase F0 sector subunit a</fullName>
    </alternativeName>
    <alternativeName>
        <fullName evidence="1">F-ATPase subunit 6</fullName>
    </alternativeName>
</protein>
<feature type="chain" id="PRO_0000362513" description="ATP synthase subunit a">
    <location>
        <begin position="1"/>
        <end position="274"/>
    </location>
</feature>
<feature type="transmembrane region" description="Helical" evidence="1">
    <location>
        <begin position="43"/>
        <end position="63"/>
    </location>
</feature>
<feature type="transmembrane region" description="Helical" evidence="1">
    <location>
        <begin position="103"/>
        <end position="123"/>
    </location>
</feature>
<feature type="transmembrane region" description="Helical" evidence="1">
    <location>
        <begin position="149"/>
        <end position="169"/>
    </location>
</feature>
<feature type="transmembrane region" description="Helical" evidence="1">
    <location>
        <begin position="223"/>
        <end position="243"/>
    </location>
</feature>
<feature type="transmembrane region" description="Helical" evidence="1">
    <location>
        <begin position="245"/>
        <end position="265"/>
    </location>
</feature>
<sequence>MSASGEISTPRDYIGHHLNHLQLDLRTFELVNPHSTGPATFWTLNIDSLFFSVVLGLAFLLVFRKVAASATSGVPGKLQTAVELIIGFVDNSVRDMYHGKSKVIAPLALTVFVWVLLMNMMDLLPIDLLPYIGEHVFGLPALRVVPTADVSITLSMALGVFILIIFYSIKMKGVGGFTKELTMQPFNHPIFIPVNLILEGVSLLSKPLSLGLRLFGNMYAGELIFILIAGLLPWWSQWMLSVPWAIFHILIITLQAFIFMVLTIVYLSMASEEH</sequence>
<accession>Q7CFM3</accession>
<accession>Q74P96</accession>
<evidence type="ECO:0000255" key="1">
    <source>
        <dbReference type="HAMAP-Rule" id="MF_01393"/>
    </source>
</evidence>
<keyword id="KW-0066">ATP synthesis</keyword>
<keyword id="KW-0997">Cell inner membrane</keyword>
<keyword id="KW-1003">Cell membrane</keyword>
<keyword id="KW-0138">CF(0)</keyword>
<keyword id="KW-0375">Hydrogen ion transport</keyword>
<keyword id="KW-0406">Ion transport</keyword>
<keyword id="KW-0472">Membrane</keyword>
<keyword id="KW-1185">Reference proteome</keyword>
<keyword id="KW-0812">Transmembrane</keyword>
<keyword id="KW-1133">Transmembrane helix</keyword>
<keyword id="KW-0813">Transport</keyword>
<proteinExistence type="inferred from homology"/>